<evidence type="ECO:0000250" key="1">
    <source>
        <dbReference type="UniProtKB" id="Q9UPQ4"/>
    </source>
</evidence>
<evidence type="ECO:0000255" key="2"/>
<evidence type="ECO:0000255" key="3">
    <source>
        <dbReference type="PROSITE-ProRule" id="PRU00024"/>
    </source>
</evidence>
<evidence type="ECO:0000255" key="4">
    <source>
        <dbReference type="PROSITE-ProRule" id="PRU00175"/>
    </source>
</evidence>
<evidence type="ECO:0000255" key="5">
    <source>
        <dbReference type="PROSITE-ProRule" id="PRU00548"/>
    </source>
</evidence>
<evidence type="ECO:0000269" key="6">
    <source>
    </source>
</evidence>
<evidence type="ECO:0000269" key="7">
    <source>
    </source>
</evidence>
<evidence type="ECO:0000269" key="8">
    <source>
    </source>
</evidence>
<evidence type="ECO:0000303" key="9">
    <source>
    </source>
</evidence>
<evidence type="ECO:0000305" key="10"/>
<accession>Q8C006</accession>
<accession>A6H681</accession>
<accession>Q6ZPY0</accession>
<accession>Q7TQL7</accession>
<accession>Q810V7</accession>
<accession>Q8BVY9</accession>
<accession>Q8VID4</accession>
<accession>Q9CW74</accession>
<accession>Q9D208</accession>
<gene>
    <name type="primary">Trim35</name>
    <name type="synonym">Hls5</name>
    <name type="synonym">Kiaa1098</name>
    <name type="synonym">Mair</name>
</gene>
<reference key="1">
    <citation type="journal article" date="2003" name="J. Biol. Chem.">
        <title>Cloning and characterization of a novel RING-B-box-coiled-coil protein with apoptotic function.</title>
        <authorList>
            <person name="Kimura F."/>
            <person name="Suzu S."/>
            <person name="Nakamura Y."/>
            <person name="Nakata Y."/>
            <person name="Yamada M."/>
            <person name="Kuwada N."/>
            <person name="Matsumura T."/>
            <person name="Yamashita T."/>
            <person name="Ikeda T."/>
            <person name="Sato K."/>
            <person name="Motoyoshi K."/>
        </authorList>
    </citation>
    <scope>NUCLEOTIDE SEQUENCE [MRNA] (ISOFORM 1)</scope>
    <scope>FUNCTION</scope>
    <scope>SUBCELLULAR LOCATION</scope>
    <scope>TISSUE SPECIFICITY</scope>
</reference>
<reference key="2">
    <citation type="journal article" date="2004" name="J. Biol. Chem.">
        <title>HLS5, a novel RBCC (ring finger, B box, coiled-coil) family member isolated from a hemopoietic lineage switch, is a candidate tumor suppressor.</title>
        <authorList>
            <person name="Lalonde J.-P."/>
            <person name="Lim R."/>
            <person name="Ingley E."/>
            <person name="Tilbrook P.A."/>
            <person name="Thompson M.J."/>
            <person name="McCulloch R."/>
            <person name="Beaumont J.G."/>
            <person name="Wicking C."/>
            <person name="Eyre H.J."/>
            <person name="Sutherland G.R."/>
            <person name="Howe K."/>
            <person name="Solomon E."/>
            <person name="Williams J.H."/>
            <person name="Klinken S.P."/>
        </authorList>
    </citation>
    <scope>NUCLEOTIDE SEQUENCE [MRNA] (ISOFORM 1)</scope>
    <scope>FUNCTION</scope>
    <scope>SUBCELLULAR LOCATION</scope>
    <scope>TISSUE SPECIFICITY</scope>
    <scope>DEVELOPMENTAL STAGE</scope>
    <source>
        <tissue>Liver</tissue>
    </source>
</reference>
<reference key="3">
    <citation type="journal article" date="2005" name="Science">
        <title>The transcriptional landscape of the mammalian genome.</title>
        <authorList>
            <person name="Carninci P."/>
            <person name="Kasukawa T."/>
            <person name="Katayama S."/>
            <person name="Gough J."/>
            <person name="Frith M.C."/>
            <person name="Maeda N."/>
            <person name="Oyama R."/>
            <person name="Ravasi T."/>
            <person name="Lenhard B."/>
            <person name="Wells C."/>
            <person name="Kodzius R."/>
            <person name="Shimokawa K."/>
            <person name="Bajic V.B."/>
            <person name="Brenner S.E."/>
            <person name="Batalov S."/>
            <person name="Forrest A.R."/>
            <person name="Zavolan M."/>
            <person name="Davis M.J."/>
            <person name="Wilming L.G."/>
            <person name="Aidinis V."/>
            <person name="Allen J.E."/>
            <person name="Ambesi-Impiombato A."/>
            <person name="Apweiler R."/>
            <person name="Aturaliya R.N."/>
            <person name="Bailey T.L."/>
            <person name="Bansal M."/>
            <person name="Baxter L."/>
            <person name="Beisel K.W."/>
            <person name="Bersano T."/>
            <person name="Bono H."/>
            <person name="Chalk A.M."/>
            <person name="Chiu K.P."/>
            <person name="Choudhary V."/>
            <person name="Christoffels A."/>
            <person name="Clutterbuck D.R."/>
            <person name="Crowe M.L."/>
            <person name="Dalla E."/>
            <person name="Dalrymple B.P."/>
            <person name="de Bono B."/>
            <person name="Della Gatta G."/>
            <person name="di Bernardo D."/>
            <person name="Down T."/>
            <person name="Engstrom P."/>
            <person name="Fagiolini M."/>
            <person name="Faulkner G."/>
            <person name="Fletcher C.F."/>
            <person name="Fukushima T."/>
            <person name="Furuno M."/>
            <person name="Futaki S."/>
            <person name="Gariboldi M."/>
            <person name="Georgii-Hemming P."/>
            <person name="Gingeras T.R."/>
            <person name="Gojobori T."/>
            <person name="Green R.E."/>
            <person name="Gustincich S."/>
            <person name="Harbers M."/>
            <person name="Hayashi Y."/>
            <person name="Hensch T.K."/>
            <person name="Hirokawa N."/>
            <person name="Hill D."/>
            <person name="Huminiecki L."/>
            <person name="Iacono M."/>
            <person name="Ikeo K."/>
            <person name="Iwama A."/>
            <person name="Ishikawa T."/>
            <person name="Jakt M."/>
            <person name="Kanapin A."/>
            <person name="Katoh M."/>
            <person name="Kawasawa Y."/>
            <person name="Kelso J."/>
            <person name="Kitamura H."/>
            <person name="Kitano H."/>
            <person name="Kollias G."/>
            <person name="Krishnan S.P."/>
            <person name="Kruger A."/>
            <person name="Kummerfeld S.K."/>
            <person name="Kurochkin I.V."/>
            <person name="Lareau L.F."/>
            <person name="Lazarevic D."/>
            <person name="Lipovich L."/>
            <person name="Liu J."/>
            <person name="Liuni S."/>
            <person name="McWilliam S."/>
            <person name="Madan Babu M."/>
            <person name="Madera M."/>
            <person name="Marchionni L."/>
            <person name="Matsuda H."/>
            <person name="Matsuzawa S."/>
            <person name="Miki H."/>
            <person name="Mignone F."/>
            <person name="Miyake S."/>
            <person name="Morris K."/>
            <person name="Mottagui-Tabar S."/>
            <person name="Mulder N."/>
            <person name="Nakano N."/>
            <person name="Nakauchi H."/>
            <person name="Ng P."/>
            <person name="Nilsson R."/>
            <person name="Nishiguchi S."/>
            <person name="Nishikawa S."/>
            <person name="Nori F."/>
            <person name="Ohara O."/>
            <person name="Okazaki Y."/>
            <person name="Orlando V."/>
            <person name="Pang K.C."/>
            <person name="Pavan W.J."/>
            <person name="Pavesi G."/>
            <person name="Pesole G."/>
            <person name="Petrovsky N."/>
            <person name="Piazza S."/>
            <person name="Reed J."/>
            <person name="Reid J.F."/>
            <person name="Ring B.Z."/>
            <person name="Ringwald M."/>
            <person name="Rost B."/>
            <person name="Ruan Y."/>
            <person name="Salzberg S.L."/>
            <person name="Sandelin A."/>
            <person name="Schneider C."/>
            <person name="Schoenbach C."/>
            <person name="Sekiguchi K."/>
            <person name="Semple C.A."/>
            <person name="Seno S."/>
            <person name="Sessa L."/>
            <person name="Sheng Y."/>
            <person name="Shibata Y."/>
            <person name="Shimada H."/>
            <person name="Shimada K."/>
            <person name="Silva D."/>
            <person name="Sinclair B."/>
            <person name="Sperling S."/>
            <person name="Stupka E."/>
            <person name="Sugiura K."/>
            <person name="Sultana R."/>
            <person name="Takenaka Y."/>
            <person name="Taki K."/>
            <person name="Tammoja K."/>
            <person name="Tan S.L."/>
            <person name="Tang S."/>
            <person name="Taylor M.S."/>
            <person name="Tegner J."/>
            <person name="Teichmann S.A."/>
            <person name="Ueda H.R."/>
            <person name="van Nimwegen E."/>
            <person name="Verardo R."/>
            <person name="Wei C.L."/>
            <person name="Yagi K."/>
            <person name="Yamanishi H."/>
            <person name="Zabarovsky E."/>
            <person name="Zhu S."/>
            <person name="Zimmer A."/>
            <person name="Hide W."/>
            <person name="Bult C."/>
            <person name="Grimmond S.M."/>
            <person name="Teasdale R.D."/>
            <person name="Liu E.T."/>
            <person name="Brusic V."/>
            <person name="Quackenbush J."/>
            <person name="Wahlestedt C."/>
            <person name="Mattick J.S."/>
            <person name="Hume D.A."/>
            <person name="Kai C."/>
            <person name="Sasaki D."/>
            <person name="Tomaru Y."/>
            <person name="Fukuda S."/>
            <person name="Kanamori-Katayama M."/>
            <person name="Suzuki M."/>
            <person name="Aoki J."/>
            <person name="Arakawa T."/>
            <person name="Iida J."/>
            <person name="Imamura K."/>
            <person name="Itoh M."/>
            <person name="Kato T."/>
            <person name="Kawaji H."/>
            <person name="Kawagashira N."/>
            <person name="Kawashima T."/>
            <person name="Kojima M."/>
            <person name="Kondo S."/>
            <person name="Konno H."/>
            <person name="Nakano K."/>
            <person name="Ninomiya N."/>
            <person name="Nishio T."/>
            <person name="Okada M."/>
            <person name="Plessy C."/>
            <person name="Shibata K."/>
            <person name="Shiraki T."/>
            <person name="Suzuki S."/>
            <person name="Tagami M."/>
            <person name="Waki K."/>
            <person name="Watahiki A."/>
            <person name="Okamura-Oho Y."/>
            <person name="Suzuki H."/>
            <person name="Kawai J."/>
            <person name="Hayashizaki Y."/>
        </authorList>
    </citation>
    <scope>NUCLEOTIDE SEQUENCE [LARGE SCALE MRNA] (ISOFORM 1)</scope>
    <source>
        <strain>C57BL/6J</strain>
        <tissue>Brain</tissue>
        <tissue>Cerebellum</tissue>
        <tissue>Tongue</tissue>
    </source>
</reference>
<reference key="4">
    <citation type="journal article" date="2003" name="DNA Res.">
        <title>Prediction of the coding sequences of mouse homologues of KIAA gene: III. The complete nucleotide sequences of 500 mouse KIAA-homologous cDNAs identified by screening of terminal sequences of cDNA clones randomly sampled from size-fractionated libraries.</title>
        <authorList>
            <person name="Okazaki N."/>
            <person name="Kikuno R."/>
            <person name="Ohara R."/>
            <person name="Inamoto S."/>
            <person name="Koseki H."/>
            <person name="Hiraoka S."/>
            <person name="Saga Y."/>
            <person name="Nagase T."/>
            <person name="Ohara O."/>
            <person name="Koga H."/>
        </authorList>
    </citation>
    <scope>NUCLEOTIDE SEQUENCE [LARGE SCALE MRNA] (ISOFORM 2)</scope>
    <source>
        <tissue>Embryonic tail</tissue>
    </source>
</reference>
<reference key="5">
    <citation type="journal article" date="2004" name="Genome Res.">
        <title>The status, quality, and expansion of the NIH full-length cDNA project: the Mammalian Gene Collection (MGC).</title>
        <authorList>
            <consortium name="The MGC Project Team"/>
        </authorList>
    </citation>
    <scope>NUCLEOTIDE SEQUENCE [LARGE SCALE MRNA] (ISOFORM 1)</scope>
    <source>
        <strain>C57BL/6J</strain>
        <tissue>Brain</tissue>
        <tissue>Pancreas</tissue>
    </source>
</reference>
<reference key="6">
    <citation type="journal article" date="2020" name="Protein Cell">
        <title>TRIM35 mediates protection against influenza infection by activating TRAF3 and degrading viral PB2.</title>
        <authorList>
            <person name="Sun N."/>
            <person name="Jiang L."/>
            <person name="Ye M."/>
            <person name="Wang Y."/>
            <person name="Wang G."/>
            <person name="Wan X."/>
            <person name="Zhao Y."/>
            <person name="Wen X."/>
            <person name="Liang L."/>
            <person name="Ma S."/>
            <person name="Liu L."/>
            <person name="Bu Z."/>
            <person name="Chen H."/>
            <person name="Li C."/>
        </authorList>
    </citation>
    <scope>FUNCTION</scope>
    <scope>DISRUPTION PHENOTYPE</scope>
</reference>
<protein>
    <recommendedName>
        <fullName>E3 ubiquitin-protein ligase TRIM35</fullName>
        <ecNumber>2.3.2.27</ecNumber>
    </recommendedName>
    <alternativeName>
        <fullName>Hemopoietic lineage switch protein 5</fullName>
    </alternativeName>
    <alternativeName>
        <fullName>Macrophage-derived apoptosis-inducing RBCC protein</fullName>
        <shortName>Protein MAIR</shortName>
    </alternativeName>
    <alternativeName>
        <fullName>Protein Nc8</fullName>
    </alternativeName>
</protein>
<proteinExistence type="evidence at protein level"/>
<keyword id="KW-0007">Acetylation</keyword>
<keyword id="KW-0025">Alternative splicing</keyword>
<keyword id="KW-0053">Apoptosis</keyword>
<keyword id="KW-0175">Coiled coil</keyword>
<keyword id="KW-0963">Cytoplasm</keyword>
<keyword id="KW-0479">Metal-binding</keyword>
<keyword id="KW-0539">Nucleus</keyword>
<keyword id="KW-0597">Phosphoprotein</keyword>
<keyword id="KW-1185">Reference proteome</keyword>
<keyword id="KW-0808">Transferase</keyword>
<keyword id="KW-0833">Ubl conjugation pathway</keyword>
<keyword id="KW-0862">Zinc</keyword>
<keyword id="KW-0863">Zinc-finger</keyword>
<name>TRI35_MOUSE</name>
<comment type="function">
    <text evidence="1 8">E3 ubiquitin-protein ligase that participates in multiple biological processes including cell death, glucose metabolism, and in particular, the innate immune response (By similarity) (PubMed:32562145). Mediates 'Lys-63'-linked polyubiquitination of TRAF3 thereby promoting type I interferon production via RIG-I signaling pathway. Can also catalyze 'Lys-48'-linked polyubiquitination and proteasomal degradation of viral proteins such as influenza virus PB2. Acts as a negative feedback regulator of TLR7- and TLR9-triggered signaling. Mechanistically, promotes the 'Lys-48'-linked ubiquitination of IRF7 and induces its degradation via a proteasome-dependent pathway. Reduces FGFR1-dependent tyrosine phosphorylation of PKM, inhibiting PKM-dependent lactate production, glucose metabolism, and cell growth (By similarity).</text>
</comment>
<comment type="catalytic activity">
    <reaction>
        <text>S-ubiquitinyl-[E2 ubiquitin-conjugating enzyme]-L-cysteine + [acceptor protein]-L-lysine = [E2 ubiquitin-conjugating enzyme]-L-cysteine + N(6)-ubiquitinyl-[acceptor protein]-L-lysine.</text>
        <dbReference type="EC" id="2.3.2.27"/>
    </reaction>
</comment>
<comment type="pathway">
    <text>Protein modification; protein ubiquitination.</text>
</comment>
<comment type="subunit">
    <text evidence="1">Interacts with PKM isoform M2, but not isoform M1; this interaction may compete with that between PKM and FGFR1, and hence reduces FGFR1-dependent tyrosine phosphorylation of PKM. Interacts with IRF7; this interaction promotes IRF7 proteasomal degradation. Interacts with TRAF3; this interaction promotes TRAF3 activation.</text>
</comment>
<comment type="interaction">
    <interactant intactId="EBI-2536044">
        <id>Q8C006</id>
    </interactant>
    <interactant intactId="EBI-997907">
        <id>P70434</id>
        <label>Irf7</label>
    </interactant>
    <organismsDiffer>false</organismsDiffer>
    <experiments>2</experiments>
</comment>
<comment type="subcellular location">
    <subcellularLocation>
        <location evidence="6">Cytoplasm</location>
    </subcellularLocation>
    <subcellularLocation>
        <location>Nucleus</location>
    </subcellularLocation>
    <text evidence="6">Found predominantly in cytoplasm with a granular distribution. Found in punctuate nuclear bodies in transfected COS and HeLa cells.</text>
</comment>
<comment type="alternative products">
    <event type="alternative splicing"/>
    <isoform>
        <id>Q8C006-1</id>
        <name>1</name>
        <sequence type="displayed"/>
    </isoform>
    <isoform>
        <id>Q8C006-2</id>
        <name>2</name>
        <sequence type="described" ref="VSP_012062 VSP_019230"/>
    </isoform>
</comment>
<comment type="tissue specificity">
    <text evidence="6 7">Widely expressed. Highly expressed in brain, heart, kidney, spleen, skeletal muscle, lung and thymus. Lower expression found in stomach, large intestine and bone marrow.</text>
</comment>
<comment type="developmental stage">
    <text evidence="7">At 10.5 dpc expression was detected in branchial arches 1 and 2 and the fronto-nasal process, limb buds, spinal cord, and dorsal root ganglia. At 12.0 dpc expression was detected primarily in the limbs and transiently in the developing eye. By 13.5 dpc, expression in the limb was restricted to thetelencephalic region of forebrain.</text>
</comment>
<comment type="induction">
    <text>Induced by macrophage colony-stimulating factor in murine peritoneal and bone marrow macrophages.</text>
</comment>
<comment type="domain">
    <text>The RING finger domain and the coiled-coil region are required for the apoptosis-inducing activity.</text>
</comment>
<comment type="disruption phenotype">
    <text evidence="8">Deletion mutants are more sensitive to viral infections with a dramatically increased viral load.</text>
</comment>
<comment type="similarity">
    <text evidence="10">Belongs to the TRIM/RBCC family.</text>
</comment>
<comment type="sequence caution" evidence="10">
    <conflict type="erroneous initiation">
        <sequence resource="EMBL-CDS" id="AAI45784"/>
    </conflict>
</comment>
<comment type="sequence caution" evidence="10">
    <conflict type="erroneous initiation">
        <sequence resource="EMBL-CDS" id="AAI45810"/>
    </conflict>
</comment>
<comment type="sequence caution" evidence="10">
    <conflict type="frameshift">
        <sequence resource="EMBL-CDS" id="BAB22506"/>
    </conflict>
</comment>
<comment type="sequence caution" evidence="10">
    <conflict type="erroneous initiation">
        <sequence resource="EMBL-CDS" id="BAC27962"/>
    </conflict>
</comment>
<comment type="sequence caution" evidence="10">
    <conflict type="erroneous initiation">
        <sequence resource="EMBL-CDS" id="BAC98098"/>
    </conflict>
</comment>
<dbReference type="EC" id="2.3.2.27"/>
<dbReference type="EMBL" id="AB060155">
    <property type="protein sequence ID" value="BAB83914.1"/>
    <property type="molecule type" value="mRNA"/>
</dbReference>
<dbReference type="EMBL" id="AF145374">
    <property type="protein sequence ID" value="AAN75731.1"/>
    <property type="molecule type" value="mRNA"/>
</dbReference>
<dbReference type="EMBL" id="AF491350">
    <property type="protein sequence ID" value="AAO85477.1"/>
    <property type="molecule type" value="Genomic_DNA"/>
</dbReference>
<dbReference type="EMBL" id="AK003000">
    <property type="protein sequence ID" value="BAB22506.2"/>
    <property type="status" value="ALT_FRAME"/>
    <property type="molecule type" value="mRNA"/>
</dbReference>
<dbReference type="EMBL" id="AK032635">
    <property type="protein sequence ID" value="BAC27962.1"/>
    <property type="status" value="ALT_INIT"/>
    <property type="molecule type" value="mRNA"/>
</dbReference>
<dbReference type="EMBL" id="AK075877">
    <property type="protein sequence ID" value="BAC36022.1"/>
    <property type="molecule type" value="mRNA"/>
</dbReference>
<dbReference type="EMBL" id="AK129288">
    <property type="protein sequence ID" value="BAC98098.1"/>
    <property type="status" value="ALT_INIT"/>
    <property type="molecule type" value="mRNA"/>
</dbReference>
<dbReference type="EMBL" id="BC049105">
    <property type="protein sequence ID" value="AAH49105.2"/>
    <property type="molecule type" value="mRNA"/>
</dbReference>
<dbReference type="EMBL" id="BC053494">
    <property type="protein sequence ID" value="AAH53494.1"/>
    <property type="molecule type" value="mRNA"/>
</dbReference>
<dbReference type="EMBL" id="BC145783">
    <property type="protein sequence ID" value="AAI45784.1"/>
    <property type="status" value="ALT_INIT"/>
    <property type="molecule type" value="mRNA"/>
</dbReference>
<dbReference type="EMBL" id="BC145809">
    <property type="protein sequence ID" value="AAI45810.1"/>
    <property type="status" value="ALT_INIT"/>
    <property type="molecule type" value="mRNA"/>
</dbReference>
<dbReference type="RefSeq" id="NP_084255.2">
    <property type="nucleotide sequence ID" value="NM_029979.3"/>
</dbReference>
<dbReference type="SMR" id="Q8C006"/>
<dbReference type="BioGRID" id="211764">
    <property type="interactions" value="10"/>
</dbReference>
<dbReference type="FunCoup" id="Q8C006">
    <property type="interactions" value="1991"/>
</dbReference>
<dbReference type="IntAct" id="Q8C006">
    <property type="interactions" value="5"/>
</dbReference>
<dbReference type="MINT" id="Q8C006"/>
<dbReference type="STRING" id="10090.ENSMUSP00000022623"/>
<dbReference type="iPTMnet" id="Q8C006"/>
<dbReference type="PhosphoSitePlus" id="Q8C006"/>
<dbReference type="PaxDb" id="10090-ENSMUSP00000022623"/>
<dbReference type="PeptideAtlas" id="Q8C006"/>
<dbReference type="ProteomicsDB" id="259320">
    <molecule id="Q8C006-1"/>
</dbReference>
<dbReference type="ProteomicsDB" id="259321">
    <molecule id="Q8C006-2"/>
</dbReference>
<dbReference type="Pumba" id="Q8C006"/>
<dbReference type="DNASU" id="66854"/>
<dbReference type="GeneID" id="66854"/>
<dbReference type="KEGG" id="mmu:66854"/>
<dbReference type="UCSC" id="uc007ukd.1">
    <molecule id="Q8C006-1"/>
    <property type="organism name" value="mouse"/>
</dbReference>
<dbReference type="UCSC" id="uc007uke.1">
    <molecule id="Q8C006-2"/>
    <property type="organism name" value="mouse"/>
</dbReference>
<dbReference type="AGR" id="MGI:1914104"/>
<dbReference type="CTD" id="23087"/>
<dbReference type="MGI" id="MGI:1914104">
    <property type="gene designation" value="Trim35"/>
</dbReference>
<dbReference type="eggNOG" id="KOG2177">
    <property type="taxonomic scope" value="Eukaryota"/>
</dbReference>
<dbReference type="InParanoid" id="Q8C006"/>
<dbReference type="OrthoDB" id="6105938at2759"/>
<dbReference type="PhylomeDB" id="Q8C006"/>
<dbReference type="TreeFam" id="TF334286"/>
<dbReference type="UniPathway" id="UPA00143"/>
<dbReference type="BioGRID-ORCS" id="66854">
    <property type="hits" value="3 hits in 79 CRISPR screens"/>
</dbReference>
<dbReference type="ChiTaRS" id="Trim35">
    <property type="organism name" value="mouse"/>
</dbReference>
<dbReference type="PRO" id="PR:Q8C006"/>
<dbReference type="Proteomes" id="UP000000589">
    <property type="component" value="Unplaced"/>
</dbReference>
<dbReference type="RNAct" id="Q8C006">
    <property type="molecule type" value="protein"/>
</dbReference>
<dbReference type="GO" id="GO:0005737">
    <property type="term" value="C:cytoplasm"/>
    <property type="evidence" value="ECO:0000314"/>
    <property type="project" value="MGI"/>
</dbReference>
<dbReference type="GO" id="GO:0005634">
    <property type="term" value="C:nucleus"/>
    <property type="evidence" value="ECO:0000314"/>
    <property type="project" value="MGI"/>
</dbReference>
<dbReference type="GO" id="GO:0016740">
    <property type="term" value="F:transferase activity"/>
    <property type="evidence" value="ECO:0007669"/>
    <property type="project" value="UniProtKB-KW"/>
</dbReference>
<dbReference type="GO" id="GO:0008270">
    <property type="term" value="F:zinc ion binding"/>
    <property type="evidence" value="ECO:0007669"/>
    <property type="project" value="UniProtKB-KW"/>
</dbReference>
<dbReference type="GO" id="GO:0033028">
    <property type="term" value="P:myeloid cell apoptotic process"/>
    <property type="evidence" value="ECO:0000314"/>
    <property type="project" value="MGI"/>
</dbReference>
<dbReference type="GO" id="GO:0008285">
    <property type="term" value="P:negative regulation of cell population proliferation"/>
    <property type="evidence" value="ECO:0000314"/>
    <property type="project" value="MGI"/>
</dbReference>
<dbReference type="GO" id="GO:0033034">
    <property type="term" value="P:positive regulation of myeloid cell apoptotic process"/>
    <property type="evidence" value="ECO:0000314"/>
    <property type="project" value="MGI"/>
</dbReference>
<dbReference type="GO" id="GO:0016567">
    <property type="term" value="P:protein ubiquitination"/>
    <property type="evidence" value="ECO:0007669"/>
    <property type="project" value="UniProtKB-UniPathway"/>
</dbReference>
<dbReference type="CDD" id="cd16599">
    <property type="entry name" value="RING-HC_TRIM35_C-IV"/>
    <property type="match status" value="1"/>
</dbReference>
<dbReference type="Gene3D" id="2.60.120.920">
    <property type="match status" value="1"/>
</dbReference>
<dbReference type="Gene3D" id="3.30.160.60">
    <property type="entry name" value="Classic Zinc Finger"/>
    <property type="match status" value="1"/>
</dbReference>
<dbReference type="Gene3D" id="3.30.40.10">
    <property type="entry name" value="Zinc/RING finger domain, C3HC4 (zinc finger)"/>
    <property type="match status" value="1"/>
</dbReference>
<dbReference type="InterPro" id="IPR001870">
    <property type="entry name" value="B30.2/SPRY"/>
</dbReference>
<dbReference type="InterPro" id="IPR043136">
    <property type="entry name" value="B30.2/SPRY_sf"/>
</dbReference>
<dbReference type="InterPro" id="IPR003879">
    <property type="entry name" value="Butyrophylin_SPRY"/>
</dbReference>
<dbReference type="InterPro" id="IPR013320">
    <property type="entry name" value="ConA-like_dom_sf"/>
</dbReference>
<dbReference type="InterPro" id="IPR006574">
    <property type="entry name" value="PRY"/>
</dbReference>
<dbReference type="InterPro" id="IPR003877">
    <property type="entry name" value="SPRY_dom"/>
</dbReference>
<dbReference type="InterPro" id="IPR050143">
    <property type="entry name" value="TRIM/RBCC"/>
</dbReference>
<dbReference type="InterPro" id="IPR027370">
    <property type="entry name" value="Znf-RING_euk"/>
</dbReference>
<dbReference type="InterPro" id="IPR000315">
    <property type="entry name" value="Znf_B-box"/>
</dbReference>
<dbReference type="InterPro" id="IPR001841">
    <property type="entry name" value="Znf_RING"/>
</dbReference>
<dbReference type="InterPro" id="IPR013083">
    <property type="entry name" value="Znf_RING/FYVE/PHD"/>
</dbReference>
<dbReference type="InterPro" id="IPR017907">
    <property type="entry name" value="Znf_RING_CS"/>
</dbReference>
<dbReference type="PANTHER" id="PTHR24103">
    <property type="entry name" value="E3 UBIQUITIN-PROTEIN LIGASE TRIM"/>
    <property type="match status" value="1"/>
</dbReference>
<dbReference type="Pfam" id="PF13765">
    <property type="entry name" value="PRY"/>
    <property type="match status" value="1"/>
</dbReference>
<dbReference type="Pfam" id="PF00622">
    <property type="entry name" value="SPRY"/>
    <property type="match status" value="1"/>
</dbReference>
<dbReference type="Pfam" id="PF00643">
    <property type="entry name" value="zf-B_box"/>
    <property type="match status" value="1"/>
</dbReference>
<dbReference type="Pfam" id="PF13445">
    <property type="entry name" value="zf-RING_UBOX"/>
    <property type="match status" value="1"/>
</dbReference>
<dbReference type="PRINTS" id="PR01407">
    <property type="entry name" value="BUTYPHLNCDUF"/>
</dbReference>
<dbReference type="SMART" id="SM00336">
    <property type="entry name" value="BBOX"/>
    <property type="match status" value="1"/>
</dbReference>
<dbReference type="SMART" id="SM00589">
    <property type="entry name" value="PRY"/>
    <property type="match status" value="1"/>
</dbReference>
<dbReference type="SMART" id="SM00184">
    <property type="entry name" value="RING"/>
    <property type="match status" value="1"/>
</dbReference>
<dbReference type="SMART" id="SM00449">
    <property type="entry name" value="SPRY"/>
    <property type="match status" value="1"/>
</dbReference>
<dbReference type="SUPFAM" id="SSF57845">
    <property type="entry name" value="B-box zinc-binding domain"/>
    <property type="match status" value="1"/>
</dbReference>
<dbReference type="SUPFAM" id="SSF49899">
    <property type="entry name" value="Concanavalin A-like lectins/glucanases"/>
    <property type="match status" value="1"/>
</dbReference>
<dbReference type="SUPFAM" id="SSF57850">
    <property type="entry name" value="RING/U-box"/>
    <property type="match status" value="1"/>
</dbReference>
<dbReference type="PROSITE" id="PS50188">
    <property type="entry name" value="B302_SPRY"/>
    <property type="match status" value="1"/>
</dbReference>
<dbReference type="PROSITE" id="PS50119">
    <property type="entry name" value="ZF_BBOX"/>
    <property type="match status" value="1"/>
</dbReference>
<dbReference type="PROSITE" id="PS00518">
    <property type="entry name" value="ZF_RING_1"/>
    <property type="match status" value="1"/>
</dbReference>
<dbReference type="PROSITE" id="PS50089">
    <property type="entry name" value="ZF_RING_2"/>
    <property type="match status" value="1"/>
</dbReference>
<sequence length="501" mass="57345">MEPGPSVSPGPSRSFKEELLCAVCYDPFRDAVTLRCGHNFCRRCVSGCWEVQTTPSCPVCKERAVPGELRTNHTLNNLVETLLREEAEGARWTGRRSPRPCRAHRAPLTLFCLEDKELLCCACQADARHQEHRVQPIKDTAQDFRAKCKNMEHVLREKAKAFWALRRTYEAIAKHNEVQTTWLEGRIRDEFDKLRDFLRVEEQATLDAMKEESRKKHLQAEEKMKQLAEQTEALAREIERLQMEMKEDDMTFLMKHKSRKRRLFCTVEPAPLQPGLLMDACKYLESLQYRVWKKMLGSVESVPFSLDPNTAAGWLKVADDLTSVINHGYRVQVENPERFSSAPCLLGSQVFSKGSHSWEVDVGGLPTWRVGVVRVQAHAQAQAQADVGGEGHSHSCYHDTRSGFWYLCRTQGVDGDHCMTSDTATAPLVQAMPRRLRVELECEEGELSFYDSERHCHLYTFHAHFGEVRPYFYLGASRGDGPPEPLRICHLRVSIKEELDI</sequence>
<feature type="chain" id="PRO_0000056251" description="E3 ubiquitin-protein ligase TRIM35">
    <location>
        <begin position="1"/>
        <end position="501"/>
    </location>
</feature>
<feature type="domain" description="B30.2/SPRY" evidence="5">
    <location>
        <begin position="284"/>
        <end position="495"/>
    </location>
</feature>
<feature type="zinc finger region" description="RING-type" evidence="4">
    <location>
        <begin position="21"/>
        <end position="61"/>
    </location>
</feature>
<feature type="zinc finger region" description="B box-type" evidence="3">
    <location>
        <begin position="96"/>
        <end position="137"/>
    </location>
</feature>
<feature type="coiled-coil region" evidence="2">
    <location>
        <begin position="200"/>
        <end position="252"/>
    </location>
</feature>
<feature type="binding site" evidence="3">
    <location>
        <position position="101"/>
    </location>
    <ligand>
        <name>Zn(2+)</name>
        <dbReference type="ChEBI" id="CHEBI:29105"/>
    </ligand>
</feature>
<feature type="binding site" evidence="3">
    <location>
        <position position="104"/>
    </location>
    <ligand>
        <name>Zn(2+)</name>
        <dbReference type="ChEBI" id="CHEBI:29105"/>
    </ligand>
</feature>
<feature type="binding site" evidence="3">
    <location>
        <position position="123"/>
    </location>
    <ligand>
        <name>Zn(2+)</name>
        <dbReference type="ChEBI" id="CHEBI:29105"/>
    </ligand>
</feature>
<feature type="binding site" evidence="3">
    <location>
        <position position="129"/>
    </location>
    <ligand>
        <name>Zn(2+)</name>
        <dbReference type="ChEBI" id="CHEBI:29105"/>
    </ligand>
</feature>
<feature type="modified residue" description="N-acetylmethionine" evidence="1">
    <location>
        <position position="1"/>
    </location>
</feature>
<feature type="modified residue" description="Phosphoserine" evidence="1">
    <location>
        <position position="8"/>
    </location>
</feature>
<feature type="splice variant" id="VSP_012062" description="In isoform 2." evidence="9">
    <original>AKCKNMEHVLREKAKAFWALRRTYEAIAKHNEVQTTW</original>
    <variation>VSTAPARPGDPRLAPPPPPGLATILPPVQANLNNDGE</variation>
    <location>
        <begin position="146"/>
        <end position="182"/>
    </location>
</feature>
<feature type="splice variant" id="VSP_019230" description="In isoform 2." evidence="9">
    <location>
        <begin position="183"/>
        <end position="501"/>
    </location>
</feature>
<feature type="sequence conflict" description="In Ref. 3; BAC36022." evidence="10" ref="3">
    <original>D</original>
    <variation>Y</variation>
    <location>
        <position position="207"/>
    </location>
</feature>
<feature type="sequence conflict" description="In Ref. 3; BAC36022." evidence="10" ref="3">
    <original>S</original>
    <variation>T</variation>
    <location>
        <position position="213"/>
    </location>
</feature>
<feature type="sequence conflict" description="In Ref. 3; BAB22506." evidence="10" ref="3">
    <original>Y</original>
    <variation>H</variation>
    <location>
        <position position="329"/>
    </location>
</feature>
<organism>
    <name type="scientific">Mus musculus</name>
    <name type="common">Mouse</name>
    <dbReference type="NCBI Taxonomy" id="10090"/>
    <lineage>
        <taxon>Eukaryota</taxon>
        <taxon>Metazoa</taxon>
        <taxon>Chordata</taxon>
        <taxon>Craniata</taxon>
        <taxon>Vertebrata</taxon>
        <taxon>Euteleostomi</taxon>
        <taxon>Mammalia</taxon>
        <taxon>Eutheria</taxon>
        <taxon>Euarchontoglires</taxon>
        <taxon>Glires</taxon>
        <taxon>Rodentia</taxon>
        <taxon>Myomorpha</taxon>
        <taxon>Muroidea</taxon>
        <taxon>Muridae</taxon>
        <taxon>Murinae</taxon>
        <taxon>Mus</taxon>
        <taxon>Mus</taxon>
    </lineage>
</organism>